<protein>
    <recommendedName>
        <fullName evidence="1">NAD-dependent protein deacylase 2</fullName>
        <ecNumber evidence="1 2">2.3.1.286</ecNumber>
    </recommendedName>
    <alternativeName>
        <fullName evidence="1">Regulatory protein SIR2 homolog 2</fullName>
    </alternativeName>
    <alternativeName>
        <fullName>SIR2-Af2</fullName>
    </alternativeName>
</protein>
<reference key="1">
    <citation type="journal article" date="1997" name="Nature">
        <title>The complete genome sequence of the hyperthermophilic, sulphate-reducing archaeon Archaeoglobus fulgidus.</title>
        <authorList>
            <person name="Klenk H.-P."/>
            <person name="Clayton R.A."/>
            <person name="Tomb J.-F."/>
            <person name="White O."/>
            <person name="Nelson K.E."/>
            <person name="Ketchum K.A."/>
            <person name="Dodson R.J."/>
            <person name="Gwinn M.L."/>
            <person name="Hickey E.K."/>
            <person name="Peterson J.D."/>
            <person name="Richardson D.L."/>
            <person name="Kerlavage A.R."/>
            <person name="Graham D.E."/>
            <person name="Kyrpides N.C."/>
            <person name="Fleischmann R.D."/>
            <person name="Quackenbush J."/>
            <person name="Lee N.H."/>
            <person name="Sutton G.G."/>
            <person name="Gill S.R."/>
            <person name="Kirkness E.F."/>
            <person name="Dougherty B.A."/>
            <person name="McKenney K."/>
            <person name="Adams M.D."/>
            <person name="Loftus B.J."/>
            <person name="Peterson S.N."/>
            <person name="Reich C.I."/>
            <person name="McNeil L.K."/>
            <person name="Badger J.H."/>
            <person name="Glodek A."/>
            <person name="Zhou L."/>
            <person name="Overbeek R."/>
            <person name="Gocayne J.D."/>
            <person name="Weidman J.F."/>
            <person name="McDonald L.A."/>
            <person name="Utterback T.R."/>
            <person name="Cotton M.D."/>
            <person name="Spriggs T."/>
            <person name="Artiach P."/>
            <person name="Kaine B.P."/>
            <person name="Sykes S.M."/>
            <person name="Sadow P.W."/>
            <person name="D'Andrea K.P."/>
            <person name="Bowman C."/>
            <person name="Fujii C."/>
            <person name="Garland S.A."/>
            <person name="Mason T.M."/>
            <person name="Olsen G.J."/>
            <person name="Fraser C.M."/>
            <person name="Smith H.O."/>
            <person name="Woese C.R."/>
            <person name="Venter J.C."/>
        </authorList>
    </citation>
    <scope>NUCLEOTIDE SEQUENCE [LARGE SCALE GENOMIC DNA]</scope>
    <source>
        <strain>ATCC 49558 / DSM 4304 / JCM 9628 / NBRC 100126 / VC-16</strain>
    </source>
</reference>
<reference key="2">
    <citation type="journal article" date="2000" name="Proc. Natl. Acad. Sci. U.S.A.">
        <title>A phylogenetically conserved NAD+-dependent protein deacetylase activity in the Sir2 protein family.</title>
        <authorList>
            <person name="Smith J.S."/>
            <person name="Brachmann C.B."/>
            <person name="Celic I."/>
            <person name="Kenna M.A."/>
            <person name="Muhammad S."/>
            <person name="Starai V.J."/>
            <person name="Avalos J.L."/>
            <person name="Escalante-Semerena J.C."/>
            <person name="Grubmeyer C."/>
            <person name="Wolberger C."/>
            <person name="Boeke J.D."/>
        </authorList>
    </citation>
    <scope>FUNCTION AS A NAD-DEPENDENT DEACETYLASE</scope>
</reference>
<reference key="3">
    <citation type="journal article" date="2001" name="Cell">
        <title>Deciphering NAD-dependent deacetylases.</title>
        <authorList>
            <person name="Dutnall R.N."/>
            <person name="Pillus L."/>
        </authorList>
    </citation>
    <scope>REVIEW</scope>
</reference>
<reference key="4">
    <citation type="journal article" date="2002" name="Mol. Cell">
        <title>Structure of a Sir2 enzyme bound to an acetylated p53 peptide.</title>
        <authorList>
            <person name="Avalos J.L."/>
            <person name="Celic I."/>
            <person name="Muhammad S."/>
            <person name="Cosgrove M.S."/>
            <person name="Boeke J.D."/>
            <person name="Wolberger C."/>
        </authorList>
    </citation>
    <scope>X-RAY CRYSTALLOGRAPHY (2.0 ANGSTROMS) OF COMPLEX WITH AN ACETYLATED P53 PEPTIDE AND ZINC</scope>
    <scope>COFACTOR</scope>
</reference>
<reference key="5">
    <citation type="journal article" date="2004" name="Mol. Cell">
        <title>Structural basis for the mechanism and regulation of Sir2 enzymes.</title>
        <authorList>
            <person name="Avalos J.L."/>
            <person name="Boeke J.D."/>
            <person name="Wolberger C."/>
        </authorList>
    </citation>
    <scope>X-RAY CRYSTALLOGRAPHY (2.3 ANGSTROMS) IN COMPLEX WITH ZINC AND NAD</scope>
    <scope>COFACTOR</scope>
</reference>
<reference key="6">
    <citation type="journal article" date="2005" name="Mol. Cell">
        <title>Mechanism of sirtuin inhibition by nicotinamide: altering the NAD(+) cosubstrate specificity of a Sir2 enzyme.</title>
        <authorList>
            <person name="Avalos J.L."/>
            <person name="Bever K.M."/>
            <person name="Wolberger C."/>
        </authorList>
    </citation>
    <scope>X-RAY CRYSTALLOGRAPHY (2.4 ANGSTROMS) IN COMPLEX WITH NAD; ZINC AND NICOTINAMIDE</scope>
    <scope>COFACTOR</scope>
</reference>
<comment type="function">
    <text evidence="1 3">NAD-dependent protein deacetylase which modulates the activities of several proteins which are inactive in their acetylated form. Deacetylates the N-terminal lysine residue of Alba, the major archaeal chromatin protein and that, in turn, increases Alba's DNA binding affinity, thereby repressing transcription.</text>
</comment>
<comment type="catalytic activity">
    <reaction evidence="1">
        <text>N(6)-acetyl-L-lysyl-[protein] + NAD(+) + H2O = 2''-O-acetyl-ADP-D-ribose + nicotinamide + L-lysyl-[protein]</text>
        <dbReference type="Rhea" id="RHEA:43636"/>
        <dbReference type="Rhea" id="RHEA-COMP:9752"/>
        <dbReference type="Rhea" id="RHEA-COMP:10731"/>
        <dbReference type="ChEBI" id="CHEBI:15377"/>
        <dbReference type="ChEBI" id="CHEBI:17154"/>
        <dbReference type="ChEBI" id="CHEBI:29969"/>
        <dbReference type="ChEBI" id="CHEBI:57540"/>
        <dbReference type="ChEBI" id="CHEBI:61930"/>
        <dbReference type="ChEBI" id="CHEBI:83767"/>
        <dbReference type="EC" id="2.3.1.286"/>
    </reaction>
</comment>
<comment type="cofactor">
    <cofactor evidence="1 4 5 6">
        <name>Zn(2+)</name>
        <dbReference type="ChEBI" id="CHEBI:29105"/>
    </cofactor>
    <text evidence="1 4 5 6">Binds 1 zinc ion per subunit.</text>
</comment>
<comment type="subcellular location">
    <subcellularLocation>
        <location evidence="1">Cytoplasm</location>
    </subcellularLocation>
</comment>
<comment type="miscellaneous">
    <text evidence="7">The two SIR2 homologs in this organism, Af1 and Af2, display different substrate specificities in vitro. Af2 can deacetylate histones and peptides corresponding to the C-terminal part of p53 in a NAD-dependent manner (PubMed:12408821).</text>
</comment>
<comment type="similarity">
    <text evidence="1">Belongs to the sirtuin family. Class III subfamily.</text>
</comment>
<sequence>MEDEIRKAAEILAKSKHAVVFTGAGISAESGIPTFRGEDGLWRKYDPEEVASISGFKRNPRAFWEFSMEMKDKLFAEPNPAHYAIAELERMGIVKAVITQNIDMLHQRAGSRRVLELHGSMDKLDCLDCHETYDWSEFVEDFNKGEIPRCRKCGSYYVKPRVVLFGEPLPQRTLFEAIEEAKHCDAFMVVGSSLVVYPAAELPYIAKKAGAKMIIVNAEPTMADPIFDVKIIGKAGEVLPKIVEEVKRLRSEK</sequence>
<accession>O30124</accession>
<organism>
    <name type="scientific">Archaeoglobus fulgidus (strain ATCC 49558 / DSM 4304 / JCM 9628 / NBRC 100126 / VC-16)</name>
    <dbReference type="NCBI Taxonomy" id="224325"/>
    <lineage>
        <taxon>Archaea</taxon>
        <taxon>Methanobacteriati</taxon>
        <taxon>Methanobacteriota</taxon>
        <taxon>Archaeoglobi</taxon>
        <taxon>Archaeoglobales</taxon>
        <taxon>Archaeoglobaceae</taxon>
        <taxon>Archaeoglobus</taxon>
    </lineage>
</organism>
<keyword id="KW-0002">3D-structure</keyword>
<keyword id="KW-0963">Cytoplasm</keyword>
<keyword id="KW-0479">Metal-binding</keyword>
<keyword id="KW-0520">NAD</keyword>
<keyword id="KW-1185">Reference proteome</keyword>
<keyword id="KW-0804">Transcription</keyword>
<keyword id="KW-0805">Transcription regulation</keyword>
<keyword id="KW-0808">Transferase</keyword>
<keyword id="KW-0862">Zinc</keyword>
<evidence type="ECO:0000255" key="1">
    <source>
        <dbReference type="HAMAP-Rule" id="MF_01121"/>
    </source>
</evidence>
<evidence type="ECO:0000255" key="2">
    <source>
        <dbReference type="PROSITE-ProRule" id="PRU00236"/>
    </source>
</evidence>
<evidence type="ECO:0000269" key="3">
    <source>
    </source>
</evidence>
<evidence type="ECO:0000269" key="4">
    <source>
    </source>
</evidence>
<evidence type="ECO:0000269" key="5">
    <source>
    </source>
</evidence>
<evidence type="ECO:0000269" key="6">
    <source>
    </source>
</evidence>
<evidence type="ECO:0000305" key="7">
    <source>
    </source>
</evidence>
<evidence type="ECO:0007829" key="8">
    <source>
        <dbReference type="PDB" id="1S7G"/>
    </source>
</evidence>
<evidence type="ECO:0007829" key="9">
    <source>
        <dbReference type="PDB" id="4TWJ"/>
    </source>
</evidence>
<gene>
    <name evidence="1" type="primary">cobB2</name>
    <name type="synonym">Sir2Af2</name>
    <name type="ordered locus">AF_0112</name>
</gene>
<feature type="chain" id="PRO_0000110378" description="NAD-dependent protein deacylase 2">
    <location>
        <begin position="1"/>
        <end position="253"/>
    </location>
</feature>
<feature type="domain" description="Deacetylase sirtuin-type" evidence="2">
    <location>
        <begin position="1"/>
        <end position="252"/>
    </location>
</feature>
<feature type="active site" description="Proton acceptor" evidence="2">
    <location>
        <position position="118"/>
    </location>
</feature>
<feature type="binding site" evidence="1 5 6">
    <location>
        <begin position="23"/>
        <end position="42"/>
    </location>
    <ligand>
        <name>NAD(+)</name>
        <dbReference type="ChEBI" id="CHEBI:57540"/>
    </ligand>
</feature>
<feature type="binding site" evidence="1 5 6">
    <location>
        <begin position="100"/>
        <end position="103"/>
    </location>
    <ligand>
        <name>NAD(+)</name>
        <dbReference type="ChEBI" id="CHEBI:57540"/>
    </ligand>
</feature>
<feature type="binding site" evidence="1 5 6">
    <location>
        <position position="126"/>
    </location>
    <ligand>
        <name>Zn(2+)</name>
        <dbReference type="ChEBI" id="CHEBI:29105"/>
    </ligand>
</feature>
<feature type="binding site" evidence="1 5 6">
    <location>
        <position position="129"/>
    </location>
    <ligand>
        <name>Zn(2+)</name>
        <dbReference type="ChEBI" id="CHEBI:29105"/>
    </ligand>
</feature>
<feature type="binding site" evidence="1 5 6">
    <location>
        <position position="150"/>
    </location>
    <ligand>
        <name>Zn(2+)</name>
        <dbReference type="ChEBI" id="CHEBI:29105"/>
    </ligand>
</feature>
<feature type="binding site" evidence="1 5 6">
    <location>
        <position position="153"/>
    </location>
    <ligand>
        <name>Zn(2+)</name>
        <dbReference type="ChEBI" id="CHEBI:29105"/>
    </ligand>
</feature>
<feature type="binding site" evidence="1 5 6">
    <location>
        <begin position="191"/>
        <end position="193"/>
    </location>
    <ligand>
        <name>NAD(+)</name>
        <dbReference type="ChEBI" id="CHEBI:57540"/>
    </ligand>
</feature>
<feature type="binding site" evidence="1 5 6">
    <location>
        <begin position="217"/>
        <end position="219"/>
    </location>
    <ligand>
        <name>NAD(+)</name>
        <dbReference type="ChEBI" id="CHEBI:57540"/>
    </ligand>
</feature>
<feature type="binding site" evidence="1 5 6">
    <location>
        <position position="235"/>
    </location>
    <ligand>
        <name>NAD(+)</name>
        <dbReference type="ChEBI" id="CHEBI:57540"/>
    </ligand>
</feature>
<feature type="helix" evidence="9">
    <location>
        <begin position="2"/>
        <end position="14"/>
    </location>
</feature>
<feature type="strand" evidence="9">
    <location>
        <begin position="16"/>
        <end position="22"/>
    </location>
</feature>
<feature type="helix" evidence="9">
    <location>
        <begin position="24"/>
        <end position="26"/>
    </location>
</feature>
<feature type="helix" evidence="8">
    <location>
        <begin position="41"/>
        <end position="44"/>
    </location>
</feature>
<feature type="helix" evidence="9">
    <location>
        <begin position="48"/>
        <end position="51"/>
    </location>
</feature>
<feature type="helix" evidence="9">
    <location>
        <begin position="53"/>
        <end position="58"/>
    </location>
</feature>
<feature type="helix" evidence="9">
    <location>
        <begin position="60"/>
        <end position="73"/>
    </location>
</feature>
<feature type="helix" evidence="9">
    <location>
        <begin position="80"/>
        <end position="90"/>
    </location>
</feature>
<feature type="strand" evidence="9">
    <location>
        <begin position="94"/>
        <end position="99"/>
    </location>
</feature>
<feature type="helix" evidence="9">
    <location>
        <begin position="105"/>
        <end position="108"/>
    </location>
</feature>
<feature type="strand" evidence="9">
    <location>
        <begin position="113"/>
        <end position="116"/>
    </location>
</feature>
<feature type="strand" evidence="9">
    <location>
        <begin position="119"/>
        <end position="126"/>
    </location>
</feature>
<feature type="turn" evidence="9">
    <location>
        <begin position="127"/>
        <end position="129"/>
    </location>
</feature>
<feature type="strand" evidence="9">
    <location>
        <begin position="132"/>
        <end position="134"/>
    </location>
</feature>
<feature type="helix" evidence="9">
    <location>
        <begin position="135"/>
        <end position="137"/>
    </location>
</feature>
<feature type="helix" evidence="9">
    <location>
        <begin position="139"/>
        <end position="143"/>
    </location>
</feature>
<feature type="turn" evidence="9">
    <location>
        <begin position="151"/>
        <end position="153"/>
    </location>
</feature>
<feature type="strand" evidence="9">
    <location>
        <begin position="158"/>
        <end position="162"/>
    </location>
</feature>
<feature type="helix" evidence="9">
    <location>
        <begin position="171"/>
        <end position="182"/>
    </location>
</feature>
<feature type="strand" evidence="9">
    <location>
        <begin position="185"/>
        <end position="191"/>
    </location>
</feature>
<feature type="turn" evidence="9">
    <location>
        <begin position="197"/>
        <end position="200"/>
    </location>
</feature>
<feature type="helix" evidence="9">
    <location>
        <begin position="201"/>
        <end position="208"/>
    </location>
</feature>
<feature type="strand" evidence="9">
    <location>
        <begin position="212"/>
        <end position="219"/>
    </location>
</feature>
<feature type="helix" evidence="9">
    <location>
        <begin position="224"/>
        <end position="226"/>
    </location>
</feature>
<feature type="strand" evidence="9">
    <location>
        <begin position="228"/>
        <end position="233"/>
    </location>
</feature>
<feature type="helix" evidence="9">
    <location>
        <begin position="235"/>
        <end position="249"/>
    </location>
</feature>
<proteinExistence type="evidence at protein level"/>
<name>NPD2_ARCFU</name>
<dbReference type="EC" id="2.3.1.286" evidence="1 2"/>
<dbReference type="EMBL" id="AE000782">
    <property type="protein sequence ID" value="AAB91115.1"/>
    <property type="molecule type" value="Genomic_DNA"/>
</dbReference>
<dbReference type="PIR" id="H69263">
    <property type="entry name" value="H69263"/>
</dbReference>
<dbReference type="RefSeq" id="WP_010877626.1">
    <property type="nucleotide sequence ID" value="NC_000917.1"/>
</dbReference>
<dbReference type="PDB" id="1MA3">
    <property type="method" value="X-ray"/>
    <property type="resolution" value="2.00 A"/>
    <property type="chains" value="A=1-253"/>
</dbReference>
<dbReference type="PDB" id="1S7G">
    <property type="method" value="X-ray"/>
    <property type="resolution" value="2.30 A"/>
    <property type="chains" value="A/B/C/D/E=1-253"/>
</dbReference>
<dbReference type="PDB" id="1YC2">
    <property type="method" value="X-ray"/>
    <property type="resolution" value="2.40 A"/>
    <property type="chains" value="A/B/C/D/E=1-253"/>
</dbReference>
<dbReference type="PDB" id="4TWJ">
    <property type="method" value="X-ray"/>
    <property type="resolution" value="1.65 A"/>
    <property type="chains" value="A=1-253"/>
</dbReference>
<dbReference type="PDBsum" id="1MA3"/>
<dbReference type="PDBsum" id="1S7G"/>
<dbReference type="PDBsum" id="1YC2"/>
<dbReference type="PDBsum" id="4TWJ"/>
<dbReference type="SMR" id="O30124"/>
<dbReference type="STRING" id="224325.AF_0112"/>
<dbReference type="PaxDb" id="224325-AF_0112"/>
<dbReference type="EnsemblBacteria" id="AAB91115">
    <property type="protein sequence ID" value="AAB91115"/>
    <property type="gene ID" value="AF_0112"/>
</dbReference>
<dbReference type="GeneID" id="24793666"/>
<dbReference type="KEGG" id="afu:AF_0112"/>
<dbReference type="eggNOG" id="arCOG04248">
    <property type="taxonomic scope" value="Archaea"/>
</dbReference>
<dbReference type="HOGENOM" id="CLU_023643_3_1_2"/>
<dbReference type="OrthoDB" id="728at2157"/>
<dbReference type="PhylomeDB" id="O30124"/>
<dbReference type="BRENDA" id="2.3.1.B41">
    <property type="organism ID" value="414"/>
</dbReference>
<dbReference type="EvolutionaryTrace" id="O30124"/>
<dbReference type="Proteomes" id="UP000002199">
    <property type="component" value="Chromosome"/>
</dbReference>
<dbReference type="GO" id="GO:0005737">
    <property type="term" value="C:cytoplasm"/>
    <property type="evidence" value="ECO:0007669"/>
    <property type="project" value="UniProtKB-SubCell"/>
</dbReference>
<dbReference type="GO" id="GO:0017136">
    <property type="term" value="F:histone deacetylase activity, NAD-dependent"/>
    <property type="evidence" value="ECO:0007669"/>
    <property type="project" value="TreeGrafter"/>
</dbReference>
<dbReference type="GO" id="GO:0070403">
    <property type="term" value="F:NAD+ binding"/>
    <property type="evidence" value="ECO:0007669"/>
    <property type="project" value="UniProtKB-UniRule"/>
</dbReference>
<dbReference type="GO" id="GO:0036054">
    <property type="term" value="F:protein-malonyllysine demalonylase activity"/>
    <property type="evidence" value="ECO:0007669"/>
    <property type="project" value="InterPro"/>
</dbReference>
<dbReference type="GO" id="GO:0036055">
    <property type="term" value="F:protein-succinyllysine desuccinylase activity"/>
    <property type="evidence" value="ECO:0007669"/>
    <property type="project" value="InterPro"/>
</dbReference>
<dbReference type="GO" id="GO:0008270">
    <property type="term" value="F:zinc ion binding"/>
    <property type="evidence" value="ECO:0007669"/>
    <property type="project" value="UniProtKB-UniRule"/>
</dbReference>
<dbReference type="CDD" id="cd01413">
    <property type="entry name" value="SIR2_Af2"/>
    <property type="match status" value="1"/>
</dbReference>
<dbReference type="Gene3D" id="3.30.1600.10">
    <property type="entry name" value="SIR2/SIRT2 'Small Domain"/>
    <property type="match status" value="1"/>
</dbReference>
<dbReference type="Gene3D" id="3.40.50.1220">
    <property type="entry name" value="TPP-binding domain"/>
    <property type="match status" value="1"/>
</dbReference>
<dbReference type="HAMAP" id="MF_01121">
    <property type="entry name" value="Sirtuin_ClassIII"/>
    <property type="match status" value="1"/>
</dbReference>
<dbReference type="HAMAP" id="MF_01968">
    <property type="entry name" value="Sirtuin_ClassU"/>
    <property type="match status" value="1"/>
</dbReference>
<dbReference type="IDEAL" id="IID90001"/>
<dbReference type="InterPro" id="IPR029035">
    <property type="entry name" value="DHS-like_NAD/FAD-binding_dom"/>
</dbReference>
<dbReference type="InterPro" id="IPR050134">
    <property type="entry name" value="NAD-dep_sirtuin_deacylases"/>
</dbReference>
<dbReference type="InterPro" id="IPR003000">
    <property type="entry name" value="Sirtuin"/>
</dbReference>
<dbReference type="InterPro" id="IPR026591">
    <property type="entry name" value="Sirtuin_cat_small_dom_sf"/>
</dbReference>
<dbReference type="InterPro" id="IPR027546">
    <property type="entry name" value="Sirtuin_class_III"/>
</dbReference>
<dbReference type="InterPro" id="IPR028628">
    <property type="entry name" value="Sirtuin_class_U"/>
</dbReference>
<dbReference type="InterPro" id="IPR026590">
    <property type="entry name" value="Ssirtuin_cat_dom"/>
</dbReference>
<dbReference type="NCBIfam" id="NF001753">
    <property type="entry name" value="PRK00481.1-3"/>
    <property type="match status" value="1"/>
</dbReference>
<dbReference type="NCBIfam" id="NF040867">
    <property type="entry name" value="prot_deacyl_CobB"/>
    <property type="match status" value="1"/>
</dbReference>
<dbReference type="PANTHER" id="PTHR11085:SF11">
    <property type="entry name" value="NAD-DEPENDENT PROTEIN DEACETYLASE"/>
    <property type="match status" value="1"/>
</dbReference>
<dbReference type="PANTHER" id="PTHR11085">
    <property type="entry name" value="NAD-DEPENDENT PROTEIN DEACYLASE SIRTUIN-5, MITOCHONDRIAL-RELATED"/>
    <property type="match status" value="1"/>
</dbReference>
<dbReference type="Pfam" id="PF02146">
    <property type="entry name" value="SIR2"/>
    <property type="match status" value="1"/>
</dbReference>
<dbReference type="SUPFAM" id="SSF52467">
    <property type="entry name" value="DHS-like NAD/FAD-binding domain"/>
    <property type="match status" value="1"/>
</dbReference>
<dbReference type="PROSITE" id="PS50305">
    <property type="entry name" value="SIRTUIN"/>
    <property type="match status" value="1"/>
</dbReference>